<comment type="function">
    <text evidence="1">Couples transcription and DNA repair by recognizing RNA polymerase (RNAP) stalled at DNA lesions. Mediates ATP-dependent release of RNAP and its truncated transcript from the DNA, and recruitment of nucleotide excision repair machinery to the damaged site.</text>
</comment>
<comment type="subcellular location">
    <subcellularLocation>
        <location evidence="1">Cytoplasm</location>
    </subcellularLocation>
</comment>
<comment type="similarity">
    <text evidence="1">In the N-terminal section; belongs to the UvrB family.</text>
</comment>
<comment type="similarity">
    <text evidence="1">In the C-terminal section; belongs to the helicase family. RecG subfamily.</text>
</comment>
<name>MFD_STAEQ</name>
<keyword id="KW-0067">ATP-binding</keyword>
<keyword id="KW-0963">Cytoplasm</keyword>
<keyword id="KW-0227">DNA damage</keyword>
<keyword id="KW-0234">DNA repair</keyword>
<keyword id="KW-0238">DNA-binding</keyword>
<keyword id="KW-0347">Helicase</keyword>
<keyword id="KW-0378">Hydrolase</keyword>
<keyword id="KW-0547">Nucleotide-binding</keyword>
<keyword id="KW-1185">Reference proteome</keyword>
<organism>
    <name type="scientific">Staphylococcus epidermidis (strain ATCC 35984 / DSM 28319 / BCRC 17069 / CCUG 31568 / BM 3577 / RP62A)</name>
    <dbReference type="NCBI Taxonomy" id="176279"/>
    <lineage>
        <taxon>Bacteria</taxon>
        <taxon>Bacillati</taxon>
        <taxon>Bacillota</taxon>
        <taxon>Bacilli</taxon>
        <taxon>Bacillales</taxon>
        <taxon>Staphylococcaceae</taxon>
        <taxon>Staphylococcus</taxon>
    </lineage>
</organism>
<feature type="chain" id="PRO_0000282677" description="Transcription-repair-coupling factor">
    <location>
        <begin position="1"/>
        <end position="1169"/>
    </location>
</feature>
<feature type="domain" description="Helicase ATP-binding" evidence="1">
    <location>
        <begin position="634"/>
        <end position="795"/>
    </location>
</feature>
<feature type="domain" description="Helicase C-terminal" evidence="1">
    <location>
        <begin position="809"/>
        <end position="970"/>
    </location>
</feature>
<feature type="short sequence motif" description="DEEQ box">
    <location>
        <begin position="748"/>
        <end position="751"/>
    </location>
</feature>
<feature type="binding site" evidence="1">
    <location>
        <begin position="647"/>
        <end position="654"/>
    </location>
    <ligand>
        <name>ATP</name>
        <dbReference type="ChEBI" id="CHEBI:30616"/>
    </ligand>
</feature>
<accession>Q5HRQ2</accession>
<evidence type="ECO:0000255" key="1">
    <source>
        <dbReference type="HAMAP-Rule" id="MF_00969"/>
    </source>
</evidence>
<dbReference type="EC" id="3.6.4.-" evidence="1"/>
<dbReference type="EMBL" id="CP000029">
    <property type="protein sequence ID" value="AAW53502.1"/>
    <property type="molecule type" value="Genomic_DNA"/>
</dbReference>
<dbReference type="SMR" id="Q5HRQ2"/>
<dbReference type="STRING" id="176279.SERP0141"/>
<dbReference type="KEGG" id="ser:SERP0141"/>
<dbReference type="eggNOG" id="COG1197">
    <property type="taxonomic scope" value="Bacteria"/>
</dbReference>
<dbReference type="HOGENOM" id="CLU_005122_1_3_9"/>
<dbReference type="Proteomes" id="UP000000531">
    <property type="component" value="Chromosome"/>
</dbReference>
<dbReference type="GO" id="GO:0005737">
    <property type="term" value="C:cytoplasm"/>
    <property type="evidence" value="ECO:0007669"/>
    <property type="project" value="UniProtKB-SubCell"/>
</dbReference>
<dbReference type="GO" id="GO:0005524">
    <property type="term" value="F:ATP binding"/>
    <property type="evidence" value="ECO:0007669"/>
    <property type="project" value="UniProtKB-UniRule"/>
</dbReference>
<dbReference type="GO" id="GO:0003684">
    <property type="term" value="F:damaged DNA binding"/>
    <property type="evidence" value="ECO:0007669"/>
    <property type="project" value="InterPro"/>
</dbReference>
<dbReference type="GO" id="GO:0003678">
    <property type="term" value="F:DNA helicase activity"/>
    <property type="evidence" value="ECO:0007669"/>
    <property type="project" value="TreeGrafter"/>
</dbReference>
<dbReference type="GO" id="GO:0016787">
    <property type="term" value="F:hydrolase activity"/>
    <property type="evidence" value="ECO:0007669"/>
    <property type="project" value="UniProtKB-KW"/>
</dbReference>
<dbReference type="GO" id="GO:0006355">
    <property type="term" value="P:regulation of DNA-templated transcription"/>
    <property type="evidence" value="ECO:0007669"/>
    <property type="project" value="UniProtKB-UniRule"/>
</dbReference>
<dbReference type="GO" id="GO:0000716">
    <property type="term" value="P:transcription-coupled nucleotide-excision repair, DNA damage recognition"/>
    <property type="evidence" value="ECO:0007669"/>
    <property type="project" value="UniProtKB-UniRule"/>
</dbReference>
<dbReference type="CDD" id="cd17991">
    <property type="entry name" value="DEXHc_TRCF"/>
    <property type="match status" value="1"/>
</dbReference>
<dbReference type="FunFam" id="3.40.50.300:FF:000546">
    <property type="entry name" value="Transcription-repair-coupling factor"/>
    <property type="match status" value="1"/>
</dbReference>
<dbReference type="Gene3D" id="2.40.10.170">
    <property type="match status" value="1"/>
</dbReference>
<dbReference type="Gene3D" id="3.40.50.11180">
    <property type="match status" value="1"/>
</dbReference>
<dbReference type="Gene3D" id="3.40.50.300">
    <property type="entry name" value="P-loop containing nucleotide triphosphate hydrolases"/>
    <property type="match status" value="2"/>
</dbReference>
<dbReference type="Gene3D" id="3.30.2060.10">
    <property type="entry name" value="Penicillin-binding protein 1b domain"/>
    <property type="match status" value="1"/>
</dbReference>
<dbReference type="Gene3D" id="3.90.1150.50">
    <property type="entry name" value="Transcription-repair-coupling factor, D7 domain"/>
    <property type="match status" value="1"/>
</dbReference>
<dbReference type="HAMAP" id="MF_00969">
    <property type="entry name" value="TRCF"/>
    <property type="match status" value="1"/>
</dbReference>
<dbReference type="InterPro" id="IPR003711">
    <property type="entry name" value="CarD-like/TRCF_RID"/>
</dbReference>
<dbReference type="InterPro" id="IPR036101">
    <property type="entry name" value="CarD-like/TRCF_RID_sf"/>
</dbReference>
<dbReference type="InterPro" id="IPR011545">
    <property type="entry name" value="DEAD/DEAH_box_helicase_dom"/>
</dbReference>
<dbReference type="InterPro" id="IPR014001">
    <property type="entry name" value="Helicase_ATP-bd"/>
</dbReference>
<dbReference type="InterPro" id="IPR001650">
    <property type="entry name" value="Helicase_C-like"/>
</dbReference>
<dbReference type="InterPro" id="IPR004576">
    <property type="entry name" value="Mfd"/>
</dbReference>
<dbReference type="InterPro" id="IPR027417">
    <property type="entry name" value="P-loop_NTPase"/>
</dbReference>
<dbReference type="InterPro" id="IPR047112">
    <property type="entry name" value="RecG/Mfd"/>
</dbReference>
<dbReference type="InterPro" id="IPR037235">
    <property type="entry name" value="TRCF-like_C_D7"/>
</dbReference>
<dbReference type="InterPro" id="IPR005118">
    <property type="entry name" value="TRCF_C"/>
</dbReference>
<dbReference type="InterPro" id="IPR041471">
    <property type="entry name" value="UvrB_inter"/>
</dbReference>
<dbReference type="NCBIfam" id="TIGR00580">
    <property type="entry name" value="mfd"/>
    <property type="match status" value="1"/>
</dbReference>
<dbReference type="PANTHER" id="PTHR47964">
    <property type="entry name" value="ATP-DEPENDENT DNA HELICASE HOMOLOG RECG, CHLOROPLASTIC"/>
    <property type="match status" value="1"/>
</dbReference>
<dbReference type="PANTHER" id="PTHR47964:SF1">
    <property type="entry name" value="ATP-DEPENDENT DNA HELICASE HOMOLOG RECG, CHLOROPLASTIC"/>
    <property type="match status" value="1"/>
</dbReference>
<dbReference type="Pfam" id="PF02559">
    <property type="entry name" value="CarD_TRCF_RID"/>
    <property type="match status" value="1"/>
</dbReference>
<dbReference type="Pfam" id="PF00270">
    <property type="entry name" value="DEAD"/>
    <property type="match status" value="1"/>
</dbReference>
<dbReference type="Pfam" id="PF00271">
    <property type="entry name" value="Helicase_C"/>
    <property type="match status" value="1"/>
</dbReference>
<dbReference type="Pfam" id="PF03461">
    <property type="entry name" value="TRCF"/>
    <property type="match status" value="1"/>
</dbReference>
<dbReference type="Pfam" id="PF17757">
    <property type="entry name" value="UvrB_inter"/>
    <property type="match status" value="1"/>
</dbReference>
<dbReference type="SMART" id="SM01058">
    <property type="entry name" value="CarD_TRCF"/>
    <property type="match status" value="1"/>
</dbReference>
<dbReference type="SMART" id="SM00487">
    <property type="entry name" value="DEXDc"/>
    <property type="match status" value="1"/>
</dbReference>
<dbReference type="SMART" id="SM00490">
    <property type="entry name" value="HELICc"/>
    <property type="match status" value="1"/>
</dbReference>
<dbReference type="SMART" id="SM00982">
    <property type="entry name" value="TRCF"/>
    <property type="match status" value="1"/>
</dbReference>
<dbReference type="SUPFAM" id="SSF141259">
    <property type="entry name" value="CarD-like"/>
    <property type="match status" value="1"/>
</dbReference>
<dbReference type="SUPFAM" id="SSF52540">
    <property type="entry name" value="P-loop containing nucleoside triphosphate hydrolases"/>
    <property type="match status" value="4"/>
</dbReference>
<dbReference type="SUPFAM" id="SSF143517">
    <property type="entry name" value="TRCF domain-like"/>
    <property type="match status" value="1"/>
</dbReference>
<dbReference type="PROSITE" id="PS51192">
    <property type="entry name" value="HELICASE_ATP_BIND_1"/>
    <property type="match status" value="1"/>
</dbReference>
<dbReference type="PROSITE" id="PS51194">
    <property type="entry name" value="HELICASE_CTER"/>
    <property type="match status" value="1"/>
</dbReference>
<proteinExistence type="inferred from homology"/>
<protein>
    <recommendedName>
        <fullName evidence="1">Transcription-repair-coupling factor</fullName>
        <shortName evidence="1">TRCF</shortName>
        <ecNumber evidence="1">3.6.4.-</ecNumber>
    </recommendedName>
</protein>
<gene>
    <name evidence="1" type="primary">mfd</name>
    <name type="ordered locus">SERP0141</name>
</gene>
<reference key="1">
    <citation type="journal article" date="2005" name="J. Bacteriol.">
        <title>Insights on evolution of virulence and resistance from the complete genome analysis of an early methicillin-resistant Staphylococcus aureus strain and a biofilm-producing methicillin-resistant Staphylococcus epidermidis strain.</title>
        <authorList>
            <person name="Gill S.R."/>
            <person name="Fouts D.E."/>
            <person name="Archer G.L."/>
            <person name="Mongodin E.F."/>
            <person name="DeBoy R.T."/>
            <person name="Ravel J."/>
            <person name="Paulsen I.T."/>
            <person name="Kolonay J.F."/>
            <person name="Brinkac L.M."/>
            <person name="Beanan M.J."/>
            <person name="Dodson R.J."/>
            <person name="Daugherty S.C."/>
            <person name="Madupu R."/>
            <person name="Angiuoli S.V."/>
            <person name="Durkin A.S."/>
            <person name="Haft D.H."/>
            <person name="Vamathevan J.J."/>
            <person name="Khouri H."/>
            <person name="Utterback T.R."/>
            <person name="Lee C."/>
            <person name="Dimitrov G."/>
            <person name="Jiang L."/>
            <person name="Qin H."/>
            <person name="Weidman J."/>
            <person name="Tran K."/>
            <person name="Kang K.H."/>
            <person name="Hance I.R."/>
            <person name="Nelson K.E."/>
            <person name="Fraser C.M."/>
        </authorList>
    </citation>
    <scope>NUCLEOTIDE SEQUENCE [LARGE SCALE GENOMIC DNA]</scope>
    <source>
        <strain>ATCC 35984 / DSM 28319 / BCRC 17069 / CCUG 31568 / BM 3577 / RP62A</strain>
    </source>
</reference>
<sequence>MKSMIANYISEDNRFQELDEVFGQENILVTGLSPSAKATIIAEKYLKDHKQMLLVTNNLYQADKIETDILQYVDDSEVYKYPVQDIMTEEFSTQSPQLMSERVRTLTALAQGEKGLFIVPLNGFKKWLTPVDLWKDHQMTLKVGQDIDVDAFLNKLVNMGYRRESVVSHIGEFSLRGGIIDIYPLIGTPVRIELFDTEVDSIRDFDVETQRSNDNINQVEITTASDYIITDEVIQHLQNELKKAYEYTRPKIEKSVRNDLKETYESFKLFESTFFDHQLLRRLVSFMYEKPSTLIDYFQKNAIIVVDEFNRIKETEETLTTEVEDFMSNLIESGNGFIGQGFMKYESFDALLEQHAVAYFTLFTSSMQVPLQHIIKFSCKPVQQFYGQYDIMRSEFQRYVHQDYTVVVLVETETKVERIQSMLNEMHIPTVSNIHEDIDGGQVVVTEGSLSEGFELPYMQLVVITERELFKTRQKKQRKRTKTISNAEKIKSYQDLNVGDYIVHVHHGVGRYLGVETLEVGDTHRDYIKLQYKGTDQLFVPVDQMDQVQKYVASEDKSPRLNKLGGTEWKKTKAKVQQSVEDIADELIDLYKEREMSVGYQYGQDTAEQSAFEHDFPYELTPDQSKSIDEIKGDMERARPMDRLLCGDVGYGKTEVAVRAAFKAVMDGKQVAFLVPTTILAQQHYETLLERMQDFPVEIQLVSRFRTAKEIRETKEGLKSGYVDIVVGTHKLLGKDIQYKDLGLLIVDEEQRFGVRHKERIKTLKKNVDVLTLTATPIPRTLHMSMLGVRDLSVIETPPENRFPVQTYVLEQNTNFIKEALERELSRDGQVFYLYNKVQSIYEKREQLQRLMPDANIAVAHGQMTERDLEETMLSFINHEYDILVTTTIIETGVDVPNANTLIIEEADRFGLSQLYQLRGRVGRSSRIGYAYFLHPANKVLNETAEERLQAIKEFTELGSGFKIAMRDLNIRGAGNLLGKQQHGFIDSVGFDLYSQMLEEAVNEKRGIKEESPDAPDIEVELHLDAYLPAEYIQSEQAKIEIYKKLRKVETEEQLFDVKDELIDRFNDYPIEVERLLDIVEIKVHALHAGVELIKDKGKSIQIILSPKATEDINGEELFKQTQPLGRAMKVGVQNNAMNVTLTKSKQWLDSLKFLVRCIEESMAIKDED</sequence>